<proteinExistence type="inferred from homology"/>
<comment type="function">
    <text evidence="1">Accelerates the degradation of transcripts by removing pyrophosphate from the 5'-end of triphosphorylated RNA, leading to a more labile monophosphorylated state that can stimulate subsequent ribonuclease cleavage.</text>
</comment>
<comment type="cofactor">
    <cofactor evidence="1">
        <name>a divalent metal cation</name>
        <dbReference type="ChEBI" id="CHEBI:60240"/>
    </cofactor>
</comment>
<comment type="similarity">
    <text evidence="1">Belongs to the Nudix hydrolase family. RppH subfamily.</text>
</comment>
<evidence type="ECO:0000255" key="1">
    <source>
        <dbReference type="HAMAP-Rule" id="MF_00298"/>
    </source>
</evidence>
<evidence type="ECO:0000256" key="2">
    <source>
        <dbReference type="SAM" id="MobiDB-lite"/>
    </source>
</evidence>
<accession>Q606D2</accession>
<organism>
    <name type="scientific">Methylococcus capsulatus (strain ATCC 33009 / NCIMB 11132 / Bath)</name>
    <dbReference type="NCBI Taxonomy" id="243233"/>
    <lineage>
        <taxon>Bacteria</taxon>
        <taxon>Pseudomonadati</taxon>
        <taxon>Pseudomonadota</taxon>
        <taxon>Gammaproteobacteria</taxon>
        <taxon>Methylococcales</taxon>
        <taxon>Methylococcaceae</taxon>
        <taxon>Methylococcus</taxon>
    </lineage>
</organism>
<name>RPPH_METCA</name>
<reference key="1">
    <citation type="journal article" date="2004" name="PLoS Biol.">
        <title>Genomic insights into methanotrophy: the complete genome sequence of Methylococcus capsulatus (Bath).</title>
        <authorList>
            <person name="Ward N.L."/>
            <person name="Larsen O."/>
            <person name="Sakwa J."/>
            <person name="Bruseth L."/>
            <person name="Khouri H.M."/>
            <person name="Durkin A.S."/>
            <person name="Dimitrov G."/>
            <person name="Jiang L."/>
            <person name="Scanlan D."/>
            <person name="Kang K.H."/>
            <person name="Lewis M.R."/>
            <person name="Nelson K.E."/>
            <person name="Methe B.A."/>
            <person name="Wu M."/>
            <person name="Heidelberg J.F."/>
            <person name="Paulsen I.T."/>
            <person name="Fouts D.E."/>
            <person name="Ravel J."/>
            <person name="Tettelin H."/>
            <person name="Ren Q."/>
            <person name="Read T.D."/>
            <person name="DeBoy R.T."/>
            <person name="Seshadri R."/>
            <person name="Salzberg S.L."/>
            <person name="Jensen H.B."/>
            <person name="Birkeland N.K."/>
            <person name="Nelson W.C."/>
            <person name="Dodson R.J."/>
            <person name="Grindhaug S.H."/>
            <person name="Holt I.E."/>
            <person name="Eidhammer I."/>
            <person name="Jonasen I."/>
            <person name="Vanaken S."/>
            <person name="Utterback T.R."/>
            <person name="Feldblyum T.V."/>
            <person name="Fraser C.M."/>
            <person name="Lillehaug J.R."/>
            <person name="Eisen J.A."/>
        </authorList>
    </citation>
    <scope>NUCLEOTIDE SEQUENCE [LARGE SCALE GENOMIC DNA]</scope>
    <source>
        <strain>ATCC 33009 / NCIMB 11132 / Bath</strain>
    </source>
</reference>
<dbReference type="EC" id="3.6.1.-" evidence="1"/>
<dbReference type="EMBL" id="AE017282">
    <property type="protein sequence ID" value="AAU91929.1"/>
    <property type="molecule type" value="Genomic_DNA"/>
</dbReference>
<dbReference type="RefSeq" id="WP_010961329.1">
    <property type="nucleotide sequence ID" value="NC_002977.6"/>
</dbReference>
<dbReference type="SMR" id="Q606D2"/>
<dbReference type="STRING" id="243233.MCA2086"/>
<dbReference type="GeneID" id="88225311"/>
<dbReference type="KEGG" id="mca:MCA2086"/>
<dbReference type="eggNOG" id="COG0494">
    <property type="taxonomic scope" value="Bacteria"/>
</dbReference>
<dbReference type="HOGENOM" id="CLU_087195_3_1_6"/>
<dbReference type="Proteomes" id="UP000006821">
    <property type="component" value="Chromosome"/>
</dbReference>
<dbReference type="GO" id="GO:0005737">
    <property type="term" value="C:cytoplasm"/>
    <property type="evidence" value="ECO:0007669"/>
    <property type="project" value="TreeGrafter"/>
</dbReference>
<dbReference type="GO" id="GO:0034353">
    <property type="term" value="F:mRNA 5'-diphosphatase activity"/>
    <property type="evidence" value="ECO:0007669"/>
    <property type="project" value="TreeGrafter"/>
</dbReference>
<dbReference type="GO" id="GO:0006402">
    <property type="term" value="P:mRNA catabolic process"/>
    <property type="evidence" value="ECO:0007669"/>
    <property type="project" value="TreeGrafter"/>
</dbReference>
<dbReference type="CDD" id="cd03671">
    <property type="entry name" value="NUDIX_Ap4A_hydrolase_plant_like"/>
    <property type="match status" value="1"/>
</dbReference>
<dbReference type="Gene3D" id="3.90.79.10">
    <property type="entry name" value="Nucleoside Triphosphate Pyrophosphohydrolase"/>
    <property type="match status" value="1"/>
</dbReference>
<dbReference type="HAMAP" id="MF_00298">
    <property type="entry name" value="Nudix_RppH"/>
    <property type="match status" value="1"/>
</dbReference>
<dbReference type="InterPro" id="IPR015797">
    <property type="entry name" value="NUDIX_hydrolase-like_dom_sf"/>
</dbReference>
<dbReference type="InterPro" id="IPR020084">
    <property type="entry name" value="NUDIX_hydrolase_CS"/>
</dbReference>
<dbReference type="InterPro" id="IPR000086">
    <property type="entry name" value="NUDIX_hydrolase_dom"/>
</dbReference>
<dbReference type="InterPro" id="IPR022927">
    <property type="entry name" value="RppH"/>
</dbReference>
<dbReference type="NCBIfam" id="NF001937">
    <property type="entry name" value="PRK00714.1-4"/>
    <property type="match status" value="1"/>
</dbReference>
<dbReference type="NCBIfam" id="NF001938">
    <property type="entry name" value="PRK00714.1-5"/>
    <property type="match status" value="1"/>
</dbReference>
<dbReference type="PANTHER" id="PTHR23114">
    <property type="entry name" value="M7GPPPN-MRNA HYDROLASE"/>
    <property type="match status" value="1"/>
</dbReference>
<dbReference type="PANTHER" id="PTHR23114:SF17">
    <property type="entry name" value="M7GPPPN-MRNA HYDROLASE"/>
    <property type="match status" value="1"/>
</dbReference>
<dbReference type="Pfam" id="PF00293">
    <property type="entry name" value="NUDIX"/>
    <property type="match status" value="1"/>
</dbReference>
<dbReference type="SUPFAM" id="SSF55811">
    <property type="entry name" value="Nudix"/>
    <property type="match status" value="1"/>
</dbReference>
<dbReference type="PROSITE" id="PS51462">
    <property type="entry name" value="NUDIX"/>
    <property type="match status" value="1"/>
</dbReference>
<dbReference type="PROSITE" id="PS00893">
    <property type="entry name" value="NUDIX_BOX"/>
    <property type="match status" value="1"/>
</dbReference>
<sequence>MIDAEGYRLNVGIILSNDEGRVFWARRAGMRSWQFPQGGIKVDEDPDAAMFRELYEEVGLERQYVEIIARTKGWLRYQLPERFIRRRSYPLCIGQKQIWYILRLTGTDANIRLDCSERPEFDRWCWVDYWHPLSDVVYFKREVYRQALSELQRALQAGRPAGAQAVSDAGGTATRQIPVATEPSGPSSSQR</sequence>
<protein>
    <recommendedName>
        <fullName evidence="1">RNA pyrophosphohydrolase</fullName>
        <ecNumber evidence="1">3.6.1.-</ecNumber>
    </recommendedName>
    <alternativeName>
        <fullName evidence="1">(Di)nucleoside polyphosphate hydrolase</fullName>
    </alternativeName>
</protein>
<gene>
    <name evidence="1" type="primary">rppH</name>
    <name evidence="1" type="synonym">nudH</name>
    <name type="ordered locus">MCA2086</name>
</gene>
<feature type="chain" id="PRO_0000231916" description="RNA pyrophosphohydrolase">
    <location>
        <begin position="1"/>
        <end position="191"/>
    </location>
</feature>
<feature type="domain" description="Nudix hydrolase" evidence="1">
    <location>
        <begin position="6"/>
        <end position="149"/>
    </location>
</feature>
<feature type="region of interest" description="Disordered" evidence="2">
    <location>
        <begin position="162"/>
        <end position="191"/>
    </location>
</feature>
<feature type="short sequence motif" description="Nudix box">
    <location>
        <begin position="38"/>
        <end position="59"/>
    </location>
</feature>
<keyword id="KW-0378">Hydrolase</keyword>
<keyword id="KW-1185">Reference proteome</keyword>